<gene>
    <name evidence="1" type="primary">ribH</name>
    <name type="ordered locus">SAK_0875</name>
</gene>
<name>RISB_STRA1</name>
<reference key="1">
    <citation type="journal article" date="2005" name="Proc. Natl. Acad. Sci. U.S.A.">
        <title>Genome analysis of multiple pathogenic isolates of Streptococcus agalactiae: implications for the microbial 'pan-genome'.</title>
        <authorList>
            <person name="Tettelin H."/>
            <person name="Masignani V."/>
            <person name="Cieslewicz M.J."/>
            <person name="Donati C."/>
            <person name="Medini D."/>
            <person name="Ward N.L."/>
            <person name="Angiuoli S.V."/>
            <person name="Crabtree J."/>
            <person name="Jones A.L."/>
            <person name="Durkin A.S."/>
            <person name="DeBoy R.T."/>
            <person name="Davidsen T.M."/>
            <person name="Mora M."/>
            <person name="Scarselli M."/>
            <person name="Margarit y Ros I."/>
            <person name="Peterson J.D."/>
            <person name="Hauser C.R."/>
            <person name="Sundaram J.P."/>
            <person name="Nelson W.C."/>
            <person name="Madupu R."/>
            <person name="Brinkac L.M."/>
            <person name="Dodson R.J."/>
            <person name="Rosovitz M.J."/>
            <person name="Sullivan S.A."/>
            <person name="Daugherty S.C."/>
            <person name="Haft D.H."/>
            <person name="Selengut J."/>
            <person name="Gwinn M.L."/>
            <person name="Zhou L."/>
            <person name="Zafar N."/>
            <person name="Khouri H."/>
            <person name="Radune D."/>
            <person name="Dimitrov G."/>
            <person name="Watkins K."/>
            <person name="O'Connor K.J."/>
            <person name="Smith S."/>
            <person name="Utterback T.R."/>
            <person name="White O."/>
            <person name="Rubens C.E."/>
            <person name="Grandi G."/>
            <person name="Madoff L.C."/>
            <person name="Kasper D.L."/>
            <person name="Telford J.L."/>
            <person name="Wessels M.R."/>
            <person name="Rappuoli R."/>
            <person name="Fraser C.M."/>
        </authorList>
    </citation>
    <scope>NUCLEOTIDE SEQUENCE [LARGE SCALE GENOMIC DNA]</scope>
    <source>
        <strain>ATCC 27591 / A909 / CDC SS700</strain>
    </source>
</reference>
<protein>
    <recommendedName>
        <fullName evidence="1">6,7-dimethyl-8-ribityllumazine synthase</fullName>
        <shortName evidence="1">DMRL synthase</shortName>
        <shortName evidence="1">LS</shortName>
        <shortName evidence="1">Lumazine synthase</shortName>
        <ecNumber evidence="1">2.5.1.78</ecNumber>
    </recommendedName>
</protein>
<dbReference type="EC" id="2.5.1.78" evidence="1"/>
<dbReference type="EMBL" id="CP000114">
    <property type="protein sequence ID" value="ABA46223.1"/>
    <property type="molecule type" value="Genomic_DNA"/>
</dbReference>
<dbReference type="SMR" id="Q3K1V6"/>
<dbReference type="KEGG" id="sak:SAK_0875"/>
<dbReference type="HOGENOM" id="CLU_089358_1_1_9"/>
<dbReference type="UniPathway" id="UPA00275">
    <property type="reaction ID" value="UER00404"/>
</dbReference>
<dbReference type="GO" id="GO:0005829">
    <property type="term" value="C:cytosol"/>
    <property type="evidence" value="ECO:0007669"/>
    <property type="project" value="TreeGrafter"/>
</dbReference>
<dbReference type="GO" id="GO:0009349">
    <property type="term" value="C:riboflavin synthase complex"/>
    <property type="evidence" value="ECO:0007669"/>
    <property type="project" value="InterPro"/>
</dbReference>
<dbReference type="GO" id="GO:0000906">
    <property type="term" value="F:6,7-dimethyl-8-ribityllumazine synthase activity"/>
    <property type="evidence" value="ECO:0007669"/>
    <property type="project" value="UniProtKB-UniRule"/>
</dbReference>
<dbReference type="GO" id="GO:0009231">
    <property type="term" value="P:riboflavin biosynthetic process"/>
    <property type="evidence" value="ECO:0007669"/>
    <property type="project" value="UniProtKB-UniRule"/>
</dbReference>
<dbReference type="CDD" id="cd09209">
    <property type="entry name" value="Lumazine_synthase-I"/>
    <property type="match status" value="1"/>
</dbReference>
<dbReference type="FunFam" id="3.40.50.960:FF:000001">
    <property type="entry name" value="6,7-dimethyl-8-ribityllumazine synthase"/>
    <property type="match status" value="1"/>
</dbReference>
<dbReference type="Gene3D" id="3.40.50.960">
    <property type="entry name" value="Lumazine/riboflavin synthase"/>
    <property type="match status" value="1"/>
</dbReference>
<dbReference type="HAMAP" id="MF_00178">
    <property type="entry name" value="Lumazine_synth"/>
    <property type="match status" value="1"/>
</dbReference>
<dbReference type="InterPro" id="IPR034964">
    <property type="entry name" value="LS"/>
</dbReference>
<dbReference type="InterPro" id="IPR002180">
    <property type="entry name" value="LS/RS"/>
</dbReference>
<dbReference type="InterPro" id="IPR036467">
    <property type="entry name" value="LS/RS_sf"/>
</dbReference>
<dbReference type="NCBIfam" id="TIGR00114">
    <property type="entry name" value="lumazine-synth"/>
    <property type="match status" value="1"/>
</dbReference>
<dbReference type="NCBIfam" id="NF000812">
    <property type="entry name" value="PRK00061.1-4"/>
    <property type="match status" value="1"/>
</dbReference>
<dbReference type="PANTHER" id="PTHR21058:SF0">
    <property type="entry name" value="6,7-DIMETHYL-8-RIBITYLLUMAZINE SYNTHASE"/>
    <property type="match status" value="1"/>
</dbReference>
<dbReference type="PANTHER" id="PTHR21058">
    <property type="entry name" value="6,7-DIMETHYL-8-RIBITYLLUMAZINE SYNTHASE DMRL SYNTHASE LUMAZINE SYNTHASE"/>
    <property type="match status" value="1"/>
</dbReference>
<dbReference type="Pfam" id="PF00885">
    <property type="entry name" value="DMRL_synthase"/>
    <property type="match status" value="1"/>
</dbReference>
<dbReference type="SUPFAM" id="SSF52121">
    <property type="entry name" value="Lumazine synthase"/>
    <property type="match status" value="1"/>
</dbReference>
<evidence type="ECO:0000255" key="1">
    <source>
        <dbReference type="HAMAP-Rule" id="MF_00178"/>
    </source>
</evidence>
<comment type="function">
    <text evidence="1">Catalyzes the formation of 6,7-dimethyl-8-ribityllumazine by condensation of 5-amino-6-(D-ribitylamino)uracil with 3,4-dihydroxy-2-butanone 4-phosphate. This is the penultimate step in the biosynthesis of riboflavin.</text>
</comment>
<comment type="catalytic activity">
    <reaction evidence="1">
        <text>(2S)-2-hydroxy-3-oxobutyl phosphate + 5-amino-6-(D-ribitylamino)uracil = 6,7-dimethyl-8-(1-D-ribityl)lumazine + phosphate + 2 H2O + H(+)</text>
        <dbReference type="Rhea" id="RHEA:26152"/>
        <dbReference type="ChEBI" id="CHEBI:15377"/>
        <dbReference type="ChEBI" id="CHEBI:15378"/>
        <dbReference type="ChEBI" id="CHEBI:15934"/>
        <dbReference type="ChEBI" id="CHEBI:43474"/>
        <dbReference type="ChEBI" id="CHEBI:58201"/>
        <dbReference type="ChEBI" id="CHEBI:58830"/>
        <dbReference type="EC" id="2.5.1.78"/>
    </reaction>
</comment>
<comment type="pathway">
    <text evidence="1">Cofactor biosynthesis; riboflavin biosynthesis; riboflavin from 2-hydroxy-3-oxobutyl phosphate and 5-amino-6-(D-ribitylamino)uracil: step 1/2.</text>
</comment>
<comment type="similarity">
    <text evidence="1">Belongs to the DMRL synthase family.</text>
</comment>
<sequence>MTIIEGQLVANEMKIGIVVSRFNELITSKLLSGAVDGLLRHGVSEEDIDIVWVPGAFEIPYMARKMALYKDYDAIICLGVVIKGSTDHYDYVCNEVTKGIGHLNSQSDIPHIFGVLTTDNIEQAIERAGTKAGNKGYDCALSAIEMVNLDKKLRER</sequence>
<accession>Q3K1V6</accession>
<organism>
    <name type="scientific">Streptococcus agalactiae serotype Ia (strain ATCC 27591 / A909 / CDC SS700)</name>
    <dbReference type="NCBI Taxonomy" id="205921"/>
    <lineage>
        <taxon>Bacteria</taxon>
        <taxon>Bacillati</taxon>
        <taxon>Bacillota</taxon>
        <taxon>Bacilli</taxon>
        <taxon>Lactobacillales</taxon>
        <taxon>Streptococcaceae</taxon>
        <taxon>Streptococcus</taxon>
    </lineage>
</organism>
<feature type="chain" id="PRO_1000040527" description="6,7-dimethyl-8-ribityllumazine synthase">
    <location>
        <begin position="1"/>
        <end position="156"/>
    </location>
</feature>
<feature type="active site" description="Proton donor" evidence="1">
    <location>
        <position position="88"/>
    </location>
</feature>
<feature type="binding site" evidence="1">
    <location>
        <position position="22"/>
    </location>
    <ligand>
        <name>5-amino-6-(D-ribitylamino)uracil</name>
        <dbReference type="ChEBI" id="CHEBI:15934"/>
    </ligand>
</feature>
<feature type="binding site" evidence="1">
    <location>
        <begin position="56"/>
        <end position="58"/>
    </location>
    <ligand>
        <name>5-amino-6-(D-ribitylamino)uracil</name>
        <dbReference type="ChEBI" id="CHEBI:15934"/>
    </ligand>
</feature>
<feature type="binding site" evidence="1">
    <location>
        <begin position="80"/>
        <end position="82"/>
    </location>
    <ligand>
        <name>5-amino-6-(D-ribitylamino)uracil</name>
        <dbReference type="ChEBI" id="CHEBI:15934"/>
    </ligand>
</feature>
<feature type="binding site" evidence="1">
    <location>
        <begin position="85"/>
        <end position="86"/>
    </location>
    <ligand>
        <name>(2S)-2-hydroxy-3-oxobutyl phosphate</name>
        <dbReference type="ChEBI" id="CHEBI:58830"/>
    </ligand>
</feature>
<feature type="binding site" evidence="1">
    <location>
        <position position="113"/>
    </location>
    <ligand>
        <name>5-amino-6-(D-ribitylamino)uracil</name>
        <dbReference type="ChEBI" id="CHEBI:15934"/>
    </ligand>
</feature>
<feature type="binding site" evidence="1">
    <location>
        <position position="127"/>
    </location>
    <ligand>
        <name>(2S)-2-hydroxy-3-oxobutyl phosphate</name>
        <dbReference type="ChEBI" id="CHEBI:58830"/>
    </ligand>
</feature>
<proteinExistence type="inferred from homology"/>
<keyword id="KW-0686">Riboflavin biosynthesis</keyword>
<keyword id="KW-0808">Transferase</keyword>